<proteinExistence type="inferred from homology"/>
<feature type="chain" id="PRO_1000015349" description="Large-conductance mechanosensitive channel">
    <location>
        <begin position="1"/>
        <end position="135"/>
    </location>
</feature>
<feature type="transmembrane region" description="Helical" evidence="1">
    <location>
        <begin position="9"/>
        <end position="29"/>
    </location>
</feature>
<feature type="transmembrane region" description="Helical" evidence="1">
    <location>
        <begin position="79"/>
        <end position="99"/>
    </location>
</feature>
<dbReference type="EMBL" id="CP000644">
    <property type="protein sequence ID" value="ABO89161.1"/>
    <property type="molecule type" value="Genomic_DNA"/>
</dbReference>
<dbReference type="RefSeq" id="WP_005317444.1">
    <property type="nucleotide sequence ID" value="NC_009348.1"/>
</dbReference>
<dbReference type="SMR" id="A4SJT9"/>
<dbReference type="STRING" id="29491.GCA_000820065_00358"/>
<dbReference type="GeneID" id="92722267"/>
<dbReference type="KEGG" id="asa:ASA_1034"/>
<dbReference type="eggNOG" id="COG1970">
    <property type="taxonomic scope" value="Bacteria"/>
</dbReference>
<dbReference type="HOGENOM" id="CLU_095787_0_0_6"/>
<dbReference type="Proteomes" id="UP000000225">
    <property type="component" value="Chromosome"/>
</dbReference>
<dbReference type="GO" id="GO:0005886">
    <property type="term" value="C:plasma membrane"/>
    <property type="evidence" value="ECO:0007669"/>
    <property type="project" value="UniProtKB-SubCell"/>
</dbReference>
<dbReference type="GO" id="GO:0008381">
    <property type="term" value="F:mechanosensitive monoatomic ion channel activity"/>
    <property type="evidence" value="ECO:0007669"/>
    <property type="project" value="UniProtKB-UniRule"/>
</dbReference>
<dbReference type="FunFam" id="1.10.1200.120:FF:000001">
    <property type="entry name" value="Large-conductance mechanosensitive channel"/>
    <property type="match status" value="1"/>
</dbReference>
<dbReference type="Gene3D" id="1.10.1200.120">
    <property type="entry name" value="Large-conductance mechanosensitive channel, MscL, domain 1"/>
    <property type="match status" value="1"/>
</dbReference>
<dbReference type="HAMAP" id="MF_00115">
    <property type="entry name" value="MscL"/>
    <property type="match status" value="1"/>
</dbReference>
<dbReference type="InterPro" id="IPR019823">
    <property type="entry name" value="Mechanosensitive_channel_CS"/>
</dbReference>
<dbReference type="InterPro" id="IPR001185">
    <property type="entry name" value="MS_channel"/>
</dbReference>
<dbReference type="InterPro" id="IPR037673">
    <property type="entry name" value="MSC/AndL"/>
</dbReference>
<dbReference type="InterPro" id="IPR036019">
    <property type="entry name" value="MscL_channel"/>
</dbReference>
<dbReference type="NCBIfam" id="TIGR00220">
    <property type="entry name" value="mscL"/>
    <property type="match status" value="1"/>
</dbReference>
<dbReference type="NCBIfam" id="NF001843">
    <property type="entry name" value="PRK00567.1-4"/>
    <property type="match status" value="1"/>
</dbReference>
<dbReference type="PANTHER" id="PTHR30266:SF2">
    <property type="entry name" value="LARGE-CONDUCTANCE MECHANOSENSITIVE CHANNEL"/>
    <property type="match status" value="1"/>
</dbReference>
<dbReference type="PANTHER" id="PTHR30266">
    <property type="entry name" value="MECHANOSENSITIVE CHANNEL MSCL"/>
    <property type="match status" value="1"/>
</dbReference>
<dbReference type="Pfam" id="PF01741">
    <property type="entry name" value="MscL"/>
    <property type="match status" value="1"/>
</dbReference>
<dbReference type="PRINTS" id="PR01264">
    <property type="entry name" value="MECHCHANNEL"/>
</dbReference>
<dbReference type="SUPFAM" id="SSF81330">
    <property type="entry name" value="Gated mechanosensitive channel"/>
    <property type="match status" value="1"/>
</dbReference>
<dbReference type="PROSITE" id="PS01327">
    <property type="entry name" value="MSCL"/>
    <property type="match status" value="1"/>
</dbReference>
<protein>
    <recommendedName>
        <fullName evidence="1">Large-conductance mechanosensitive channel</fullName>
    </recommendedName>
</protein>
<keyword id="KW-0997">Cell inner membrane</keyword>
<keyword id="KW-1003">Cell membrane</keyword>
<keyword id="KW-0407">Ion channel</keyword>
<keyword id="KW-0406">Ion transport</keyword>
<keyword id="KW-0472">Membrane</keyword>
<keyword id="KW-0812">Transmembrane</keyword>
<keyword id="KW-1133">Transmembrane helix</keyword>
<keyword id="KW-0813">Transport</keyword>
<sequence length="135" mass="14239">MSLIQEFKAFAARGNVIDMAVGIIIGAAFGKIVSSFVGDVIMPPIGLILGGVDFSDLAVTLKAAEGATPAVVIAYGKFIQTIIDFLIISFAIFMGLKAINTLKKKQEEAAAPAGPTKDQELLSEIRDLLKSQQGK</sequence>
<organism>
    <name type="scientific">Aeromonas salmonicida (strain A449)</name>
    <dbReference type="NCBI Taxonomy" id="382245"/>
    <lineage>
        <taxon>Bacteria</taxon>
        <taxon>Pseudomonadati</taxon>
        <taxon>Pseudomonadota</taxon>
        <taxon>Gammaproteobacteria</taxon>
        <taxon>Aeromonadales</taxon>
        <taxon>Aeromonadaceae</taxon>
        <taxon>Aeromonas</taxon>
    </lineage>
</organism>
<evidence type="ECO:0000255" key="1">
    <source>
        <dbReference type="HAMAP-Rule" id="MF_00115"/>
    </source>
</evidence>
<comment type="function">
    <text evidence="1">Channel that opens in response to stretch forces in the membrane lipid bilayer. May participate in the regulation of osmotic pressure changes within the cell.</text>
</comment>
<comment type="subunit">
    <text evidence="1">Homopentamer.</text>
</comment>
<comment type="subcellular location">
    <subcellularLocation>
        <location evidence="1">Cell inner membrane</location>
        <topology evidence="1">Multi-pass membrane protein</topology>
    </subcellularLocation>
</comment>
<comment type="similarity">
    <text evidence="1">Belongs to the MscL family.</text>
</comment>
<gene>
    <name evidence="1" type="primary">mscL</name>
    <name type="ordered locus">ASA_1034</name>
</gene>
<name>MSCL_AERS4</name>
<reference key="1">
    <citation type="journal article" date="2008" name="BMC Genomics">
        <title>The genome of Aeromonas salmonicida subsp. salmonicida A449: insights into the evolution of a fish pathogen.</title>
        <authorList>
            <person name="Reith M.E."/>
            <person name="Singh R.K."/>
            <person name="Curtis B."/>
            <person name="Boyd J.M."/>
            <person name="Bouevitch A."/>
            <person name="Kimball J."/>
            <person name="Munholland J."/>
            <person name="Murphy C."/>
            <person name="Sarty D."/>
            <person name="Williams J."/>
            <person name="Nash J.H."/>
            <person name="Johnson S.C."/>
            <person name="Brown L.L."/>
        </authorList>
    </citation>
    <scope>NUCLEOTIDE SEQUENCE [LARGE SCALE GENOMIC DNA]</scope>
    <source>
        <strain>A449</strain>
    </source>
</reference>
<accession>A4SJT9</accession>